<reference key="1">
    <citation type="journal article" date="1996" name="J. Cell Biol.">
        <title>SPC4, SPC6, and the novel protease SPC7 are coexpressed with bone morphogenetic proteins at distinct sites during embryogenesis.</title>
        <authorList>
            <person name="Constam D.B."/>
            <person name="Calfon M."/>
            <person name="Robertson E.J."/>
        </authorList>
    </citation>
    <scope>NUCLEOTIDE SEQUENCE [MRNA]</scope>
    <scope>DEVELOPMENTAL STAGE</scope>
    <source>
        <strain>C57BL/6J</strain>
        <tissue>Embryo</tissue>
    </source>
</reference>
<reference key="2">
    <citation type="journal article" date="2005" name="Science">
        <title>The transcriptional landscape of the mammalian genome.</title>
        <authorList>
            <person name="Carninci P."/>
            <person name="Kasukawa T."/>
            <person name="Katayama S."/>
            <person name="Gough J."/>
            <person name="Frith M.C."/>
            <person name="Maeda N."/>
            <person name="Oyama R."/>
            <person name="Ravasi T."/>
            <person name="Lenhard B."/>
            <person name="Wells C."/>
            <person name="Kodzius R."/>
            <person name="Shimokawa K."/>
            <person name="Bajic V.B."/>
            <person name="Brenner S.E."/>
            <person name="Batalov S."/>
            <person name="Forrest A.R."/>
            <person name="Zavolan M."/>
            <person name="Davis M.J."/>
            <person name="Wilming L.G."/>
            <person name="Aidinis V."/>
            <person name="Allen J.E."/>
            <person name="Ambesi-Impiombato A."/>
            <person name="Apweiler R."/>
            <person name="Aturaliya R.N."/>
            <person name="Bailey T.L."/>
            <person name="Bansal M."/>
            <person name="Baxter L."/>
            <person name="Beisel K.W."/>
            <person name="Bersano T."/>
            <person name="Bono H."/>
            <person name="Chalk A.M."/>
            <person name="Chiu K.P."/>
            <person name="Choudhary V."/>
            <person name="Christoffels A."/>
            <person name="Clutterbuck D.R."/>
            <person name="Crowe M.L."/>
            <person name="Dalla E."/>
            <person name="Dalrymple B.P."/>
            <person name="de Bono B."/>
            <person name="Della Gatta G."/>
            <person name="di Bernardo D."/>
            <person name="Down T."/>
            <person name="Engstrom P."/>
            <person name="Fagiolini M."/>
            <person name="Faulkner G."/>
            <person name="Fletcher C.F."/>
            <person name="Fukushima T."/>
            <person name="Furuno M."/>
            <person name="Futaki S."/>
            <person name="Gariboldi M."/>
            <person name="Georgii-Hemming P."/>
            <person name="Gingeras T.R."/>
            <person name="Gojobori T."/>
            <person name="Green R.E."/>
            <person name="Gustincich S."/>
            <person name="Harbers M."/>
            <person name="Hayashi Y."/>
            <person name="Hensch T.K."/>
            <person name="Hirokawa N."/>
            <person name="Hill D."/>
            <person name="Huminiecki L."/>
            <person name="Iacono M."/>
            <person name="Ikeo K."/>
            <person name="Iwama A."/>
            <person name="Ishikawa T."/>
            <person name="Jakt M."/>
            <person name="Kanapin A."/>
            <person name="Katoh M."/>
            <person name="Kawasawa Y."/>
            <person name="Kelso J."/>
            <person name="Kitamura H."/>
            <person name="Kitano H."/>
            <person name="Kollias G."/>
            <person name="Krishnan S.P."/>
            <person name="Kruger A."/>
            <person name="Kummerfeld S.K."/>
            <person name="Kurochkin I.V."/>
            <person name="Lareau L.F."/>
            <person name="Lazarevic D."/>
            <person name="Lipovich L."/>
            <person name="Liu J."/>
            <person name="Liuni S."/>
            <person name="McWilliam S."/>
            <person name="Madan Babu M."/>
            <person name="Madera M."/>
            <person name="Marchionni L."/>
            <person name="Matsuda H."/>
            <person name="Matsuzawa S."/>
            <person name="Miki H."/>
            <person name="Mignone F."/>
            <person name="Miyake S."/>
            <person name="Morris K."/>
            <person name="Mottagui-Tabar S."/>
            <person name="Mulder N."/>
            <person name="Nakano N."/>
            <person name="Nakauchi H."/>
            <person name="Ng P."/>
            <person name="Nilsson R."/>
            <person name="Nishiguchi S."/>
            <person name="Nishikawa S."/>
            <person name="Nori F."/>
            <person name="Ohara O."/>
            <person name="Okazaki Y."/>
            <person name="Orlando V."/>
            <person name="Pang K.C."/>
            <person name="Pavan W.J."/>
            <person name="Pavesi G."/>
            <person name="Pesole G."/>
            <person name="Petrovsky N."/>
            <person name="Piazza S."/>
            <person name="Reed J."/>
            <person name="Reid J.F."/>
            <person name="Ring B.Z."/>
            <person name="Ringwald M."/>
            <person name="Rost B."/>
            <person name="Ruan Y."/>
            <person name="Salzberg S.L."/>
            <person name="Sandelin A."/>
            <person name="Schneider C."/>
            <person name="Schoenbach C."/>
            <person name="Sekiguchi K."/>
            <person name="Semple C.A."/>
            <person name="Seno S."/>
            <person name="Sessa L."/>
            <person name="Sheng Y."/>
            <person name="Shibata Y."/>
            <person name="Shimada H."/>
            <person name="Shimada K."/>
            <person name="Silva D."/>
            <person name="Sinclair B."/>
            <person name="Sperling S."/>
            <person name="Stupka E."/>
            <person name="Sugiura K."/>
            <person name="Sultana R."/>
            <person name="Takenaka Y."/>
            <person name="Taki K."/>
            <person name="Tammoja K."/>
            <person name="Tan S.L."/>
            <person name="Tang S."/>
            <person name="Taylor M.S."/>
            <person name="Tegner J."/>
            <person name="Teichmann S.A."/>
            <person name="Ueda H.R."/>
            <person name="van Nimwegen E."/>
            <person name="Verardo R."/>
            <person name="Wei C.L."/>
            <person name="Yagi K."/>
            <person name="Yamanishi H."/>
            <person name="Zabarovsky E."/>
            <person name="Zhu S."/>
            <person name="Zimmer A."/>
            <person name="Hide W."/>
            <person name="Bult C."/>
            <person name="Grimmond S.M."/>
            <person name="Teasdale R.D."/>
            <person name="Liu E.T."/>
            <person name="Brusic V."/>
            <person name="Quackenbush J."/>
            <person name="Wahlestedt C."/>
            <person name="Mattick J.S."/>
            <person name="Hume D.A."/>
            <person name="Kai C."/>
            <person name="Sasaki D."/>
            <person name="Tomaru Y."/>
            <person name="Fukuda S."/>
            <person name="Kanamori-Katayama M."/>
            <person name="Suzuki M."/>
            <person name="Aoki J."/>
            <person name="Arakawa T."/>
            <person name="Iida J."/>
            <person name="Imamura K."/>
            <person name="Itoh M."/>
            <person name="Kato T."/>
            <person name="Kawaji H."/>
            <person name="Kawagashira N."/>
            <person name="Kawashima T."/>
            <person name="Kojima M."/>
            <person name="Kondo S."/>
            <person name="Konno H."/>
            <person name="Nakano K."/>
            <person name="Ninomiya N."/>
            <person name="Nishio T."/>
            <person name="Okada M."/>
            <person name="Plessy C."/>
            <person name="Shibata K."/>
            <person name="Shiraki T."/>
            <person name="Suzuki S."/>
            <person name="Tagami M."/>
            <person name="Waki K."/>
            <person name="Watahiki A."/>
            <person name="Okamura-Oho Y."/>
            <person name="Suzuki H."/>
            <person name="Kawai J."/>
            <person name="Hayashizaki Y."/>
        </authorList>
    </citation>
    <scope>NUCLEOTIDE SEQUENCE [LARGE SCALE MRNA]</scope>
    <source>
        <strain>C57BL/6J</strain>
        <tissue>Spleen</tissue>
    </source>
</reference>
<reference key="3">
    <citation type="submission" date="2005-07" db="EMBL/GenBank/DDBJ databases">
        <authorList>
            <person name="Mural R.J."/>
            <person name="Adams M.D."/>
            <person name="Myers E.W."/>
            <person name="Smith H.O."/>
            <person name="Venter J.C."/>
        </authorList>
    </citation>
    <scope>NUCLEOTIDE SEQUENCE [LARGE SCALE GENOMIC DNA]</scope>
</reference>
<reference key="4">
    <citation type="journal article" date="2004" name="Genome Res.">
        <title>The status, quality, and expansion of the NIH full-length cDNA project: the Mammalian Gene Collection (MGC).</title>
        <authorList>
            <consortium name="The MGC Project Team"/>
        </authorList>
    </citation>
    <scope>NUCLEOTIDE SEQUENCE [LARGE SCALE MRNA]</scope>
    <source>
        <strain>FVB/N</strain>
        <tissue>Mammary tumor</tissue>
    </source>
</reference>
<reference key="5">
    <citation type="submission" date="1996-10" db="EMBL/GenBank/DDBJ databases">
        <authorList>
            <person name="Ebihara M."/>
            <person name="Meerabux J."/>
            <person name="Young B.D."/>
        </authorList>
    </citation>
    <scope>NUCLEOTIDE SEQUENCE [GENOMIC DNA] OF 1-384</scope>
</reference>
<name>PCSK7_MOUSE</name>
<evidence type="ECO:0000250" key="1"/>
<evidence type="ECO:0000255" key="2"/>
<evidence type="ECO:0000255" key="3">
    <source>
        <dbReference type="PROSITE-ProRule" id="PRU01173"/>
    </source>
</evidence>
<evidence type="ECO:0000255" key="4">
    <source>
        <dbReference type="PROSITE-ProRule" id="PRU01240"/>
    </source>
</evidence>
<evidence type="ECO:0000256" key="5">
    <source>
        <dbReference type="SAM" id="MobiDB-lite"/>
    </source>
</evidence>
<evidence type="ECO:0000269" key="6">
    <source>
    </source>
</evidence>
<evidence type="ECO:0000305" key="7"/>
<sequence>MPKGRQKVPHLDAHLGLPICLWLELAIFFLVPQVMGLSEAGGLDILGTGGLSWAVHLDSLEGERKEESLTQQADAVAQAAGLVNAGRIGELQGHYLFVQPTGHRQAMEVEAMRQQAEAVLARHEAVRWHSEQTLLKRAKRSIHFNDPKYPQQWHLNNRRSPGRDINVTGVWERNVTGRGVTVVVVDDGVEHTVQDIAPNYSPEGSYDLNSNDPDPMPHPDEENGNHHGTRCAGEIAAVPNNSFCAVGVAYGSRIAGIRVLDGPLTDSMEAVAFNKHYQINDIYSCSWGPDDDGKTVDGPHQLGKAALQHGVMAGRQGFGSIFVVASGNGGQHNDNCNYDGYANSIYTVTIGAVDEEGRMPFYAEECASMLAVTFSGGDKMLRSIVTTDWDLQKGTGCTEGHTGTSAAAPLAAGMIALMLQVRPCLTWRDVQHIIVFTAIQYEDHHADWLTNEAGFSHSHQHGFGLLNAWRLVNAAKIWTSVPYLASYVSPMLKENKAVPRSPHSLEVLWNVSRTDLEMSGLKTLEHVAVTVSITHPRRGSLELKLFCPSGMMSLIGAPRSMDSDPNGFNAWTFSTVRCWGERARGVYRLVIRDVGDEPLQMGILQQWQLTLYGSMWSPVDIKDRQSLLESAMSGKYLHDGFTLPCPPGLKIPEEDGYTITPNTLKTLVLVGCFSVFWTIYYMLEVCLSQRNKASTHGCRKGCCPWAPRRQNSKDAGTALESMPLCSSKDLDGVDSEHGDCTTASSFLAPELDCPPHQPPDLLQGKSGQIC</sequence>
<protein>
    <recommendedName>
        <fullName>Proprotein convertase subtilisin/kexin type 7</fullName>
        <ecNumber>3.4.21.-</ecNumber>
    </recommendedName>
    <alternativeName>
        <fullName>Prohormone convertase 7</fullName>
    </alternativeName>
    <alternativeName>
        <fullName>Proprotein convertase 7</fullName>
        <shortName>PC7</shortName>
    </alternativeName>
    <alternativeName>
        <fullName>Subtilisin-like proprotein convertase 7</fullName>
        <shortName>SPC7</shortName>
    </alternativeName>
    <alternativeName>
        <fullName>Subtilisin/kexin-like protease PC7</fullName>
    </alternativeName>
</protein>
<keyword id="KW-0165">Cleavage on pair of basic residues</keyword>
<keyword id="KW-0325">Glycoprotein</keyword>
<keyword id="KW-0333">Golgi apparatus</keyword>
<keyword id="KW-0378">Hydrolase</keyword>
<keyword id="KW-0472">Membrane</keyword>
<keyword id="KW-0645">Protease</keyword>
<keyword id="KW-1185">Reference proteome</keyword>
<keyword id="KW-0720">Serine protease</keyword>
<keyword id="KW-0732">Signal</keyword>
<keyword id="KW-0812">Transmembrane</keyword>
<keyword id="KW-1133">Transmembrane helix</keyword>
<keyword id="KW-0865">Zymogen</keyword>
<proteinExistence type="evidence at transcript level"/>
<comment type="function">
    <text>Serine endoprotease that processes various proproteins by cleavage at paired basic amino acids, recognizing the RXXX[KR]R consensus motif. Likely functions in the constitutive secretory pathway.</text>
</comment>
<comment type="cofactor">
    <cofactor evidence="1">
        <name>Ca(2+)</name>
        <dbReference type="ChEBI" id="CHEBI:29108"/>
    </cofactor>
</comment>
<comment type="activity regulation">
    <text evidence="1">Inhibited by zinc and copper.</text>
</comment>
<comment type="subcellular location">
    <subcellularLocation>
        <location evidence="1">Golgi apparatus</location>
        <location evidence="1">trans-Golgi network membrane</location>
        <topology evidence="1">Single-pass type I membrane protein</topology>
    </subcellularLocation>
    <text evidence="1">Seems to be localized intracellularly to the trans Golgi network.</text>
</comment>
<comment type="tissue specificity">
    <text>Widely expressed. Expressed in brain, lung, muscle, heart, liver, kidney, spleen and thymus.</text>
</comment>
<comment type="developmental stage">
    <text evidence="6">Ubiquitously expressed at constitutive levels during embryogenesis.</text>
</comment>
<comment type="similarity">
    <text evidence="7">Belongs to the peptidase S8 family.</text>
</comment>
<gene>
    <name type="primary">Pcsk7</name>
    <name type="synonym">Pc7</name>
</gene>
<feature type="signal peptide" evidence="1">
    <location>
        <begin position="1"/>
        <end position="36"/>
    </location>
</feature>
<feature type="propeptide" id="PRO_0000027116" evidence="1">
    <location>
        <begin position="37"/>
        <end position="140"/>
    </location>
</feature>
<feature type="chain" id="PRO_0000027117" description="Proprotein convertase subtilisin/kexin type 7">
    <location>
        <begin position="141"/>
        <end position="770"/>
    </location>
</feature>
<feature type="topological domain" description="Extracellular" evidence="2">
    <location>
        <begin position="141"/>
        <end position="666"/>
    </location>
</feature>
<feature type="transmembrane region" description="Helical" evidence="2">
    <location>
        <begin position="667"/>
        <end position="687"/>
    </location>
</feature>
<feature type="topological domain" description="Cytoplasmic" evidence="2">
    <location>
        <begin position="688"/>
        <end position="770"/>
    </location>
</feature>
<feature type="domain" description="Peptidase S8" evidence="4">
    <location>
        <begin position="152"/>
        <end position="472"/>
    </location>
</feature>
<feature type="domain" description="P/Homo B" evidence="3">
    <location>
        <begin position="480"/>
        <end position="617"/>
    </location>
</feature>
<feature type="region of interest" description="Disordered" evidence="5">
    <location>
        <begin position="195"/>
        <end position="228"/>
    </location>
</feature>
<feature type="compositionally biased region" description="Basic and acidic residues" evidence="5">
    <location>
        <begin position="215"/>
        <end position="225"/>
    </location>
</feature>
<feature type="active site" description="Charge relay system" evidence="4">
    <location>
        <position position="186"/>
    </location>
</feature>
<feature type="active site" description="Charge relay system" evidence="4">
    <location>
        <position position="227"/>
    </location>
</feature>
<feature type="active site" description="Charge relay system" evidence="4">
    <location>
        <position position="405"/>
    </location>
</feature>
<feature type="site" description="Cleavage; by autolysis" evidence="1">
    <location>
        <begin position="140"/>
        <end position="141"/>
    </location>
</feature>
<feature type="glycosylation site" description="N-linked (GlcNAc...) asparagine" evidence="2">
    <location>
        <position position="166"/>
    </location>
</feature>
<feature type="glycosylation site" description="N-linked (GlcNAc...) asparagine" evidence="2">
    <location>
        <position position="174"/>
    </location>
</feature>
<feature type="glycosylation site" description="N-linked (GlcNAc...) asparagine" evidence="2">
    <location>
        <position position="240"/>
    </location>
</feature>
<feature type="glycosylation site" description="N-linked (GlcNAc...) asparagine" evidence="2">
    <location>
        <position position="510"/>
    </location>
</feature>
<feature type="sequence conflict" description="In Ref. 1; AAB09725." evidence="7" ref="1">
    <original>HTV</original>
    <variation>THR</variation>
    <location>
        <begin position="191"/>
        <end position="193"/>
    </location>
</feature>
<organism>
    <name type="scientific">Mus musculus</name>
    <name type="common">Mouse</name>
    <dbReference type="NCBI Taxonomy" id="10090"/>
    <lineage>
        <taxon>Eukaryota</taxon>
        <taxon>Metazoa</taxon>
        <taxon>Chordata</taxon>
        <taxon>Craniata</taxon>
        <taxon>Vertebrata</taxon>
        <taxon>Euteleostomi</taxon>
        <taxon>Mammalia</taxon>
        <taxon>Eutheria</taxon>
        <taxon>Euarchontoglires</taxon>
        <taxon>Glires</taxon>
        <taxon>Rodentia</taxon>
        <taxon>Myomorpha</taxon>
        <taxon>Muroidea</taxon>
        <taxon>Muridae</taxon>
        <taxon>Murinae</taxon>
        <taxon>Mus</taxon>
        <taxon>Mus</taxon>
    </lineage>
</organism>
<dbReference type="EC" id="3.4.21.-"/>
<dbReference type="EMBL" id="U48830">
    <property type="protein sequence ID" value="AAB09725.1"/>
    <property type="molecule type" value="mRNA"/>
</dbReference>
<dbReference type="EMBL" id="AK148416">
    <property type="protein sequence ID" value="BAE28541.1"/>
    <property type="molecule type" value="mRNA"/>
</dbReference>
<dbReference type="EMBL" id="AK165389">
    <property type="protein sequence ID" value="BAE38156.1"/>
    <property type="molecule type" value="mRNA"/>
</dbReference>
<dbReference type="EMBL" id="CH466522">
    <property type="protein sequence ID" value="EDL25666.1"/>
    <property type="molecule type" value="Genomic_DNA"/>
</dbReference>
<dbReference type="EMBL" id="BC006730">
    <property type="protein sequence ID" value="AAH06730.1"/>
    <property type="molecule type" value="mRNA"/>
</dbReference>
<dbReference type="EMBL" id="U75902">
    <property type="protein sequence ID" value="AAB51126.1"/>
    <property type="molecule type" value="Genomic_DNA"/>
</dbReference>
<dbReference type="CCDS" id="CCDS40609.1"/>
<dbReference type="RefSeq" id="NP_001268863.1">
    <property type="nucleotide sequence ID" value="NM_001281934.1"/>
</dbReference>
<dbReference type="RefSeq" id="NP_032820.2">
    <property type="nucleotide sequence ID" value="NM_008794.2"/>
</dbReference>
<dbReference type="RefSeq" id="XP_017168699.1">
    <property type="nucleotide sequence ID" value="XM_017313210.1"/>
</dbReference>
<dbReference type="RefSeq" id="XP_036010579.1">
    <property type="nucleotide sequence ID" value="XM_036154686.1"/>
</dbReference>
<dbReference type="SMR" id="Q61139"/>
<dbReference type="FunCoup" id="Q61139">
    <property type="interactions" value="611"/>
</dbReference>
<dbReference type="STRING" id="10090.ENSMUSP00000047508"/>
<dbReference type="MEROPS" id="S08.077"/>
<dbReference type="GlyCosmos" id="Q61139">
    <property type="glycosylation" value="4 sites, No reported glycans"/>
</dbReference>
<dbReference type="GlyGen" id="Q61139">
    <property type="glycosylation" value="5 sites, 2 N-linked glycans (2 sites)"/>
</dbReference>
<dbReference type="iPTMnet" id="Q61139"/>
<dbReference type="PhosphoSitePlus" id="Q61139"/>
<dbReference type="PaxDb" id="10090-ENSMUSP00000047508"/>
<dbReference type="ProteomicsDB" id="288002"/>
<dbReference type="Antibodypedia" id="32336">
    <property type="antibodies" value="149 antibodies from 22 providers"/>
</dbReference>
<dbReference type="DNASU" id="18554"/>
<dbReference type="Ensembl" id="ENSMUST00000039059.8">
    <property type="protein sequence ID" value="ENSMUSP00000047508.7"/>
    <property type="gene ID" value="ENSMUSG00000035382.10"/>
</dbReference>
<dbReference type="Ensembl" id="ENSMUST00000216672.2">
    <property type="protein sequence ID" value="ENSMUSP00000150393.2"/>
    <property type="gene ID" value="ENSMUSG00000035382.10"/>
</dbReference>
<dbReference type="GeneID" id="18554"/>
<dbReference type="KEGG" id="mmu:18554"/>
<dbReference type="UCSC" id="uc009pgp.1">
    <property type="organism name" value="mouse"/>
</dbReference>
<dbReference type="AGR" id="MGI:107421"/>
<dbReference type="CTD" id="9159"/>
<dbReference type="MGI" id="MGI:107421">
    <property type="gene designation" value="Pcsk7"/>
</dbReference>
<dbReference type="VEuPathDB" id="HostDB:ENSMUSG00000035382"/>
<dbReference type="eggNOG" id="KOG3525">
    <property type="taxonomic scope" value="Eukaryota"/>
</dbReference>
<dbReference type="GeneTree" id="ENSGT00940000157676"/>
<dbReference type="HOGENOM" id="CLU_002976_4_3_1"/>
<dbReference type="InParanoid" id="Q61139"/>
<dbReference type="OMA" id="NGRMPFY"/>
<dbReference type="OrthoDB" id="300641at2759"/>
<dbReference type="PhylomeDB" id="Q61139"/>
<dbReference type="TreeFam" id="TF314277"/>
<dbReference type="BRENDA" id="3.4.21.B27">
    <property type="organism ID" value="3474"/>
</dbReference>
<dbReference type="BioGRID-ORCS" id="18554">
    <property type="hits" value="4 hits in 80 CRISPR screens"/>
</dbReference>
<dbReference type="ChiTaRS" id="Pcsk7">
    <property type="organism name" value="mouse"/>
</dbReference>
<dbReference type="PRO" id="PR:Q61139"/>
<dbReference type="Proteomes" id="UP000000589">
    <property type="component" value="Chromosome 9"/>
</dbReference>
<dbReference type="RNAct" id="Q61139">
    <property type="molecule type" value="protein"/>
</dbReference>
<dbReference type="Bgee" id="ENSMUSG00000035382">
    <property type="expression patterns" value="Expressed in granulocyte and 225 other cell types or tissues"/>
</dbReference>
<dbReference type="ExpressionAtlas" id="Q61139">
    <property type="expression patterns" value="baseline and differential"/>
</dbReference>
<dbReference type="GO" id="GO:0005788">
    <property type="term" value="C:endoplasmic reticulum lumen"/>
    <property type="evidence" value="ECO:0000304"/>
    <property type="project" value="Reactome"/>
</dbReference>
<dbReference type="GO" id="GO:0000139">
    <property type="term" value="C:Golgi membrane"/>
    <property type="evidence" value="ECO:0007669"/>
    <property type="project" value="Ensembl"/>
</dbReference>
<dbReference type="GO" id="GO:0008233">
    <property type="term" value="F:peptidase activity"/>
    <property type="evidence" value="ECO:0000266"/>
    <property type="project" value="MGI"/>
</dbReference>
<dbReference type="GO" id="GO:0004252">
    <property type="term" value="F:serine-type endopeptidase activity"/>
    <property type="evidence" value="ECO:0007669"/>
    <property type="project" value="InterPro"/>
</dbReference>
<dbReference type="GO" id="GO:0016485">
    <property type="term" value="P:protein processing"/>
    <property type="evidence" value="ECO:0000266"/>
    <property type="project" value="MGI"/>
</dbReference>
<dbReference type="CDD" id="cd04059">
    <property type="entry name" value="Peptidases_S8_Protein_convertases_Kexins_Furin-like"/>
    <property type="match status" value="1"/>
</dbReference>
<dbReference type="FunFam" id="3.30.70.850:FF:000002">
    <property type="entry name" value="Proprotein convertase subtilisin/kexin type 7"/>
    <property type="match status" value="1"/>
</dbReference>
<dbReference type="FunFam" id="3.40.50.200:FF:000005">
    <property type="entry name" value="Proprotein convertase subtilisin/kexin type 7"/>
    <property type="match status" value="1"/>
</dbReference>
<dbReference type="FunFam" id="2.60.120.260:FF:000026">
    <property type="entry name" value="proprotein convertase subtilisin/kexin type 7"/>
    <property type="match status" value="1"/>
</dbReference>
<dbReference type="Gene3D" id="2.60.120.260">
    <property type="entry name" value="Galactose-binding domain-like"/>
    <property type="match status" value="1"/>
</dbReference>
<dbReference type="Gene3D" id="3.30.70.850">
    <property type="entry name" value="Peptidase S8, pro-domain"/>
    <property type="match status" value="1"/>
</dbReference>
<dbReference type="Gene3D" id="3.40.50.200">
    <property type="entry name" value="Peptidase S8/S53 domain"/>
    <property type="match status" value="1"/>
</dbReference>
<dbReference type="InterPro" id="IPR008979">
    <property type="entry name" value="Galactose-bd-like_sf"/>
</dbReference>
<dbReference type="InterPro" id="IPR034182">
    <property type="entry name" value="Kexin/furin"/>
</dbReference>
<dbReference type="InterPro" id="IPR002884">
    <property type="entry name" value="P_dom"/>
</dbReference>
<dbReference type="InterPro" id="IPR000209">
    <property type="entry name" value="Peptidase_S8/S53_dom"/>
</dbReference>
<dbReference type="InterPro" id="IPR036852">
    <property type="entry name" value="Peptidase_S8/S53_dom_sf"/>
</dbReference>
<dbReference type="InterPro" id="IPR022398">
    <property type="entry name" value="Peptidase_S8_His-AS"/>
</dbReference>
<dbReference type="InterPro" id="IPR023828">
    <property type="entry name" value="Peptidase_S8_Ser-AS"/>
</dbReference>
<dbReference type="InterPro" id="IPR015500">
    <property type="entry name" value="Peptidase_S8_subtilisin-rel"/>
</dbReference>
<dbReference type="InterPro" id="IPR032815">
    <property type="entry name" value="S8_pro-domain"/>
</dbReference>
<dbReference type="InterPro" id="IPR038466">
    <property type="entry name" value="S8_pro-domain_sf"/>
</dbReference>
<dbReference type="PANTHER" id="PTHR42884">
    <property type="entry name" value="PROPROTEIN CONVERTASE SUBTILISIN/KEXIN-RELATED"/>
    <property type="match status" value="1"/>
</dbReference>
<dbReference type="PANTHER" id="PTHR42884:SF28">
    <property type="entry name" value="PROPROTEIN CONVERTASE SUBTILISIN_KEXIN TYPE 7"/>
    <property type="match status" value="1"/>
</dbReference>
<dbReference type="Pfam" id="PF01483">
    <property type="entry name" value="P_proprotein"/>
    <property type="match status" value="1"/>
</dbReference>
<dbReference type="Pfam" id="PF00082">
    <property type="entry name" value="Peptidase_S8"/>
    <property type="match status" value="1"/>
</dbReference>
<dbReference type="Pfam" id="PF16470">
    <property type="entry name" value="S8_pro-domain"/>
    <property type="match status" value="1"/>
</dbReference>
<dbReference type="PRINTS" id="PR00723">
    <property type="entry name" value="SUBTILISIN"/>
</dbReference>
<dbReference type="SUPFAM" id="SSF49785">
    <property type="entry name" value="Galactose-binding domain-like"/>
    <property type="match status" value="1"/>
</dbReference>
<dbReference type="SUPFAM" id="SSF54897">
    <property type="entry name" value="Protease propeptides/inhibitors"/>
    <property type="match status" value="1"/>
</dbReference>
<dbReference type="SUPFAM" id="SSF52743">
    <property type="entry name" value="Subtilisin-like"/>
    <property type="match status" value="1"/>
</dbReference>
<dbReference type="PROSITE" id="PS51829">
    <property type="entry name" value="P_HOMO_B"/>
    <property type="match status" value="1"/>
</dbReference>
<dbReference type="PROSITE" id="PS51892">
    <property type="entry name" value="SUBTILASE"/>
    <property type="match status" value="1"/>
</dbReference>
<dbReference type="PROSITE" id="PS00137">
    <property type="entry name" value="SUBTILASE_HIS"/>
    <property type="match status" value="1"/>
</dbReference>
<dbReference type="PROSITE" id="PS00138">
    <property type="entry name" value="SUBTILASE_SER"/>
    <property type="match status" value="1"/>
</dbReference>
<accession>Q61139</accession>
<accession>O08577</accession>
<accession>Q922W4</accession>